<gene>
    <name evidence="1" type="primary">SLX4-2</name>
    <name type="ORF">CTRG_00257</name>
</gene>
<sequence length="714" mass="79580">MSPEGEESHAEDNLYFHNTQMQSIHEETLAEESHAQAIQRSISRLSSFKHEDTDSESPIPVQKVIRQIKKTNTNTNTTKTKKRKLKVSKPRKNMSSSESVRQMYGSRKNGEQQGSIDGFLMSRFGEVDGCNESDRSSKLISQGEWESLSKFHEESNEKDKLLRKKIQRYYSEPQEELGEGCGMLTQASADPETKMTKEELESLYDLDSSTVFNQTTISAIGDMSEPTQVSEPCVVILSQTKVQSEASTQEDGADASVQEIKSTVPAQELFSTPEFVPAPLEQPVNKEMCSDQSIVVLEENVQSTQADDSDIVELISDSDPEPEEVSTKVQVLRSIYDSSGPVNDKQPSVASETVESDSTPIVSPVKTPQGTRMHVVQVASSNPSSPIKIVEENTEQQEEVFTDVESIYSTARTSFGTPKHTSPVILLESSDTDCDDNDNDVEPLSSMPMVKTVPKKRMRTTVLQVSAALKVQNYTDEKNNIKLRKIGDDIPVEVPTKDVEYEEIPDSQESVGGEGDNSVSIIEITREVHNNDYTGDESTDLFQVGLNKQDTCEDTSSPVVQIGGVENDILDSSLIEPVPEPESVPVPEEVQEQPQPTAIDKHTATQLREKFQLWGLKPVRGKEKMVEILQGISNFILPEHELLAVADKQELQSCIFRKLDAVIREGRAMYDRILSFEPIRLEELQSMLQSQDHYLELDVLRLYCDSSGITTTNA</sequence>
<dbReference type="EMBL" id="GG692395">
    <property type="protein sequence ID" value="EER35518.1"/>
    <property type="molecule type" value="Genomic_DNA"/>
</dbReference>
<dbReference type="RefSeq" id="XP_002545476.1">
    <property type="nucleotide sequence ID" value="XM_002545430.1"/>
</dbReference>
<dbReference type="SMR" id="C5M2G8"/>
<dbReference type="STRING" id="294747.C5M2G8"/>
<dbReference type="EnsemblFungi" id="CTRG_00257-t43_1">
    <property type="protein sequence ID" value="CTRG_00257-t43_1-p1"/>
    <property type="gene ID" value="CTRG_00257"/>
</dbReference>
<dbReference type="GeneID" id="8300622"/>
<dbReference type="KEGG" id="ctp:CTRG_00257"/>
<dbReference type="VEuPathDB" id="FungiDB:CTRG_00257"/>
<dbReference type="eggNOG" id="ENOG502RS18">
    <property type="taxonomic scope" value="Eukaryota"/>
</dbReference>
<dbReference type="HOGENOM" id="CLU_429039_0_0_1"/>
<dbReference type="OrthoDB" id="5349119at2759"/>
<dbReference type="Proteomes" id="UP000002037">
    <property type="component" value="Unassembled WGS sequence"/>
</dbReference>
<dbReference type="GO" id="GO:0033557">
    <property type="term" value="C:Slx1-Slx4 complex"/>
    <property type="evidence" value="ECO:0007669"/>
    <property type="project" value="UniProtKB-UniRule"/>
</dbReference>
<dbReference type="GO" id="GO:0017108">
    <property type="term" value="F:5'-flap endonuclease activity"/>
    <property type="evidence" value="ECO:0007669"/>
    <property type="project" value="InterPro"/>
</dbReference>
<dbReference type="GO" id="GO:0006310">
    <property type="term" value="P:DNA recombination"/>
    <property type="evidence" value="ECO:0007669"/>
    <property type="project" value="UniProtKB-UniRule"/>
</dbReference>
<dbReference type="GO" id="GO:0006281">
    <property type="term" value="P:DNA repair"/>
    <property type="evidence" value="ECO:0007669"/>
    <property type="project" value="UniProtKB-UniRule"/>
</dbReference>
<dbReference type="GO" id="GO:0006260">
    <property type="term" value="P:DNA replication"/>
    <property type="evidence" value="ECO:0007669"/>
    <property type="project" value="InterPro"/>
</dbReference>
<dbReference type="HAMAP" id="MF_03110">
    <property type="entry name" value="Endonuc_su_Slx4"/>
    <property type="match status" value="1"/>
</dbReference>
<dbReference type="InterPro" id="IPR027784">
    <property type="entry name" value="Slx4_ascomycetes"/>
</dbReference>
<dbReference type="InterPro" id="IPR018574">
    <property type="entry name" value="Structure-sp_endonuc_su_Slx4"/>
</dbReference>
<dbReference type="Pfam" id="PF09494">
    <property type="entry name" value="Slx4"/>
    <property type="match status" value="1"/>
</dbReference>
<organism>
    <name type="scientific">Candida tropicalis (strain ATCC MYA-3404 / T1)</name>
    <name type="common">Yeast</name>
    <dbReference type="NCBI Taxonomy" id="294747"/>
    <lineage>
        <taxon>Eukaryota</taxon>
        <taxon>Fungi</taxon>
        <taxon>Dikarya</taxon>
        <taxon>Ascomycota</taxon>
        <taxon>Saccharomycotina</taxon>
        <taxon>Pichiomycetes</taxon>
        <taxon>Debaryomycetaceae</taxon>
        <taxon>Candida/Lodderomyces clade</taxon>
        <taxon>Candida</taxon>
    </lineage>
</organism>
<proteinExistence type="inferred from homology"/>
<reference key="1">
    <citation type="journal article" date="2009" name="Nature">
        <title>Evolution of pathogenicity and sexual reproduction in eight Candida genomes.</title>
        <authorList>
            <person name="Butler G."/>
            <person name="Rasmussen M.D."/>
            <person name="Lin M.F."/>
            <person name="Santos M.A.S."/>
            <person name="Sakthikumar S."/>
            <person name="Munro C.A."/>
            <person name="Rheinbay E."/>
            <person name="Grabherr M."/>
            <person name="Forche A."/>
            <person name="Reedy J.L."/>
            <person name="Agrafioti I."/>
            <person name="Arnaud M.B."/>
            <person name="Bates S."/>
            <person name="Brown A.J.P."/>
            <person name="Brunke S."/>
            <person name="Costanzo M.C."/>
            <person name="Fitzpatrick D.A."/>
            <person name="de Groot P.W.J."/>
            <person name="Harris D."/>
            <person name="Hoyer L.L."/>
            <person name="Hube B."/>
            <person name="Klis F.M."/>
            <person name="Kodira C."/>
            <person name="Lennard N."/>
            <person name="Logue M.E."/>
            <person name="Martin R."/>
            <person name="Neiman A.M."/>
            <person name="Nikolaou E."/>
            <person name="Quail M.A."/>
            <person name="Quinn J."/>
            <person name="Santos M.C."/>
            <person name="Schmitzberger F.F."/>
            <person name="Sherlock G."/>
            <person name="Shah P."/>
            <person name="Silverstein K.A.T."/>
            <person name="Skrzypek M.S."/>
            <person name="Soll D."/>
            <person name="Staggs R."/>
            <person name="Stansfield I."/>
            <person name="Stumpf M.P.H."/>
            <person name="Sudbery P.E."/>
            <person name="Srikantha T."/>
            <person name="Zeng Q."/>
            <person name="Berman J."/>
            <person name="Berriman M."/>
            <person name="Heitman J."/>
            <person name="Gow N.A.R."/>
            <person name="Lorenz M.C."/>
            <person name="Birren B.W."/>
            <person name="Kellis M."/>
            <person name="Cuomo C.A."/>
        </authorList>
    </citation>
    <scope>NUCLEOTIDE SEQUENCE [LARGE SCALE GENOMIC DNA]</scope>
    <source>
        <strain>ATCC MYA-3404 / T1</strain>
    </source>
</reference>
<protein>
    <recommendedName>
        <fullName evidence="1">Structure-specific endonuclease subunit SLX4 2</fullName>
    </recommendedName>
</protein>
<keyword id="KW-0227">DNA damage</keyword>
<keyword id="KW-0233">DNA recombination</keyword>
<keyword id="KW-0234">DNA repair</keyword>
<keyword id="KW-0539">Nucleus</keyword>
<keyword id="KW-0597">Phosphoprotein</keyword>
<keyword id="KW-1185">Reference proteome</keyword>
<feature type="chain" id="PRO_0000388024" description="Structure-specific endonuclease subunit SLX4 2">
    <location>
        <begin position="1"/>
        <end position="714"/>
    </location>
</feature>
<feature type="region of interest" description="Disordered" evidence="2">
    <location>
        <begin position="1"/>
        <end position="114"/>
    </location>
</feature>
<feature type="region of interest" description="Disordered" evidence="2">
    <location>
        <begin position="338"/>
        <end position="369"/>
    </location>
</feature>
<feature type="compositionally biased region" description="Basic and acidic residues" evidence="2">
    <location>
        <begin position="1"/>
        <end position="14"/>
    </location>
</feature>
<feature type="compositionally biased region" description="Basic and acidic residues" evidence="2">
    <location>
        <begin position="24"/>
        <end position="34"/>
    </location>
</feature>
<feature type="compositionally biased region" description="Polar residues" evidence="2">
    <location>
        <begin position="36"/>
        <end position="46"/>
    </location>
</feature>
<feature type="compositionally biased region" description="Basic residues" evidence="2">
    <location>
        <begin position="79"/>
        <end position="92"/>
    </location>
</feature>
<comment type="function">
    <text evidence="1">Regulatory subunit of the SLX1-SLX4 structure-specific endonuclease that resolves DNA secondary structures generated during DNA repair and recombination. Has endonuclease activity towards branched DNA substrates, introducing single-strand cuts in duplex DNA close to junctions with ss-DNA.</text>
</comment>
<comment type="subunit">
    <text evidence="1">Forms a heterodimer with SLX1.</text>
</comment>
<comment type="subcellular location">
    <subcellularLocation>
        <location evidence="1">Nucleus</location>
    </subcellularLocation>
</comment>
<comment type="PTM">
    <text evidence="1">Phosphorylated in response to DNA damage.</text>
</comment>
<comment type="similarity">
    <text evidence="1">Belongs to the SLX4 family.</text>
</comment>
<evidence type="ECO:0000255" key="1">
    <source>
        <dbReference type="HAMAP-Rule" id="MF_03110"/>
    </source>
</evidence>
<evidence type="ECO:0000256" key="2">
    <source>
        <dbReference type="SAM" id="MobiDB-lite"/>
    </source>
</evidence>
<name>SLX42_CANTT</name>
<accession>C5M2G8</accession>